<protein>
    <recommendedName>
        <fullName evidence="1">UvrABC system protein B</fullName>
        <shortName evidence="1">Protein UvrB</shortName>
    </recommendedName>
    <alternativeName>
        <fullName evidence="1">Excinuclease ABC subunit B</fullName>
    </alternativeName>
</protein>
<comment type="function">
    <text evidence="1">The UvrABC repair system catalyzes the recognition and processing of DNA lesions. A damage recognition complex composed of 2 UvrA and 2 UvrB subunits scans DNA for abnormalities. Upon binding of the UvrA(2)B(2) complex to a putative damaged site, the DNA wraps around one UvrB monomer. DNA wrap is dependent on ATP binding by UvrB and probably causes local melting of the DNA helix, facilitating insertion of UvrB beta-hairpin between the DNA strands. Then UvrB probes one DNA strand for the presence of a lesion. If a lesion is found the UvrA subunits dissociate and the UvrB-DNA preincision complex is formed. This complex is subsequently bound by UvrC and the second UvrB is released. If no lesion is found, the DNA wraps around the other UvrB subunit that will check the other stand for damage.</text>
</comment>
<comment type="subunit">
    <text evidence="1">Forms a heterotetramer with UvrA during the search for lesions. Interacts with UvrC in an incision complex.</text>
</comment>
<comment type="subcellular location">
    <subcellularLocation>
        <location evidence="1">Cytoplasm</location>
    </subcellularLocation>
</comment>
<comment type="domain">
    <text evidence="1">The beta-hairpin motif is involved in DNA binding.</text>
</comment>
<comment type="similarity">
    <text evidence="1">Belongs to the UvrB family.</text>
</comment>
<organism>
    <name type="scientific">Neisseria gonorrhoeae</name>
    <dbReference type="NCBI Taxonomy" id="485"/>
    <lineage>
        <taxon>Bacteria</taxon>
        <taxon>Pseudomonadati</taxon>
        <taxon>Pseudomonadota</taxon>
        <taxon>Betaproteobacteria</taxon>
        <taxon>Neisseriales</taxon>
        <taxon>Neisseriaceae</taxon>
        <taxon>Neisseria</taxon>
    </lineage>
</organism>
<proteinExistence type="inferred from homology"/>
<evidence type="ECO:0000255" key="1">
    <source>
        <dbReference type="HAMAP-Rule" id="MF_00204"/>
    </source>
</evidence>
<gene>
    <name evidence="1" type="primary">uvrB</name>
</gene>
<keyword id="KW-0067">ATP-binding</keyword>
<keyword id="KW-0963">Cytoplasm</keyword>
<keyword id="KW-0227">DNA damage</keyword>
<keyword id="KW-0228">DNA excision</keyword>
<keyword id="KW-0234">DNA repair</keyword>
<keyword id="KW-0267">Excision nuclease</keyword>
<keyword id="KW-0547">Nucleotide-binding</keyword>
<keyword id="KW-0742">SOS response</keyword>
<accession>Q50939</accession>
<sequence>MEVIRYPNSPFKLHQPFPPAGDQPTAIAGLLEGLSDGLAYQTLLGVTGSGKTYTMANVIAQSGRPAIIMAHNKTLAAQLYAEMREFFPENAVEYFVSYYDYYQPEAYVPSRDLFIEKDSAINEHIEQMRLSATKNLMTRDDVIIVATVSAIYGIGDPTEYQQMVLSVKEGDTIEQRDIIATLVSMQYERGDLDFKRGSFRVRGDVIDVYPAESSENALRISLFDDEIDRLDMFDPLSGSLHQRVGRYTVFPSSHYVTPRDTVLRACESIKEELRERIEFFAREQRPVEQQRIEQRTRFDLEMLYEMGFCKGIENYSRHFSGKKEGEPPPTLMDYLPDNAIMFIDESHVTVTQIGGMYKGDASRKQNLVDYGFRLPSARDNRPLKFHEFEKVMPQTVFVSATPAKYEEEHAGQVVEQVVRPTGLVDPQIIIRPVATQVDDLMSEINDRIQKGERVLVTTLTKRMAEQLTDYYSELGIKVRYLHSDIDTVERVEIIRDLRLGLFDVLVGINLLREGLDIPEVSLVAILDADKEGFLRSHRSLIQTIGRAARNVNGVAILYADKITDSMKAAVDETERRREKQIKFNEEHGIVPQQIKKQVKDIIDGVYHEEDSGKGRRQGKNKVKVGEIHNEEDAIKEIAKLEKAMQQAARDLQFEEAAVLRDRIRNIKENLLFGAE</sequence>
<name>UVRB_NEIGO</name>
<reference key="1">
    <citation type="journal article" date="1995" name="J. Bacteriol.">
        <title>A promoter associated with the neisserial repeat can be used to transcribe the uvrB gene from Neisseria gonorrhoeae.</title>
        <authorList>
            <person name="Black C.G."/>
            <person name="Fyfe J.A.M."/>
            <person name="Davies J.K."/>
        </authorList>
    </citation>
    <scope>NUCLEOTIDE SEQUENCE [GENOMIC DNA]</scope>
    <source>
        <strain>MS11</strain>
    </source>
</reference>
<dbReference type="EMBL" id="U11547">
    <property type="protein sequence ID" value="AAA75358.1"/>
    <property type="molecule type" value="Genomic_DNA"/>
</dbReference>
<dbReference type="PIR" id="B56262">
    <property type="entry name" value="B56262"/>
</dbReference>
<dbReference type="RefSeq" id="WP_003688978.1">
    <property type="nucleotide sequence ID" value="NZ_VCDA01000002.1"/>
</dbReference>
<dbReference type="SMR" id="Q50939"/>
<dbReference type="GO" id="GO:0005737">
    <property type="term" value="C:cytoplasm"/>
    <property type="evidence" value="ECO:0007669"/>
    <property type="project" value="UniProtKB-SubCell"/>
</dbReference>
<dbReference type="GO" id="GO:0009380">
    <property type="term" value="C:excinuclease repair complex"/>
    <property type="evidence" value="ECO:0007669"/>
    <property type="project" value="InterPro"/>
</dbReference>
<dbReference type="GO" id="GO:0005524">
    <property type="term" value="F:ATP binding"/>
    <property type="evidence" value="ECO:0007669"/>
    <property type="project" value="UniProtKB-UniRule"/>
</dbReference>
<dbReference type="GO" id="GO:0016887">
    <property type="term" value="F:ATP hydrolysis activity"/>
    <property type="evidence" value="ECO:0007669"/>
    <property type="project" value="InterPro"/>
</dbReference>
<dbReference type="GO" id="GO:0003677">
    <property type="term" value="F:DNA binding"/>
    <property type="evidence" value="ECO:0007669"/>
    <property type="project" value="UniProtKB-UniRule"/>
</dbReference>
<dbReference type="GO" id="GO:0009381">
    <property type="term" value="F:excinuclease ABC activity"/>
    <property type="evidence" value="ECO:0007669"/>
    <property type="project" value="UniProtKB-UniRule"/>
</dbReference>
<dbReference type="GO" id="GO:0006289">
    <property type="term" value="P:nucleotide-excision repair"/>
    <property type="evidence" value="ECO:0007669"/>
    <property type="project" value="UniProtKB-UniRule"/>
</dbReference>
<dbReference type="GO" id="GO:0009432">
    <property type="term" value="P:SOS response"/>
    <property type="evidence" value="ECO:0007669"/>
    <property type="project" value="UniProtKB-UniRule"/>
</dbReference>
<dbReference type="CDD" id="cd17916">
    <property type="entry name" value="DEXHc_UvrB"/>
    <property type="match status" value="1"/>
</dbReference>
<dbReference type="CDD" id="cd18790">
    <property type="entry name" value="SF2_C_UvrB"/>
    <property type="match status" value="1"/>
</dbReference>
<dbReference type="Gene3D" id="6.10.140.240">
    <property type="match status" value="1"/>
</dbReference>
<dbReference type="Gene3D" id="3.40.50.300">
    <property type="entry name" value="P-loop containing nucleotide triphosphate hydrolases"/>
    <property type="match status" value="3"/>
</dbReference>
<dbReference type="Gene3D" id="4.10.860.10">
    <property type="entry name" value="UVR domain"/>
    <property type="match status" value="1"/>
</dbReference>
<dbReference type="HAMAP" id="MF_00204">
    <property type="entry name" value="UvrB"/>
    <property type="match status" value="1"/>
</dbReference>
<dbReference type="InterPro" id="IPR006935">
    <property type="entry name" value="Helicase/UvrB_N"/>
</dbReference>
<dbReference type="InterPro" id="IPR014001">
    <property type="entry name" value="Helicase_ATP-bd"/>
</dbReference>
<dbReference type="InterPro" id="IPR001650">
    <property type="entry name" value="Helicase_C-like"/>
</dbReference>
<dbReference type="InterPro" id="IPR027417">
    <property type="entry name" value="P-loop_NTPase"/>
</dbReference>
<dbReference type="InterPro" id="IPR001943">
    <property type="entry name" value="UVR_dom"/>
</dbReference>
<dbReference type="InterPro" id="IPR036876">
    <property type="entry name" value="UVR_dom_sf"/>
</dbReference>
<dbReference type="InterPro" id="IPR004807">
    <property type="entry name" value="UvrB"/>
</dbReference>
<dbReference type="InterPro" id="IPR041471">
    <property type="entry name" value="UvrB_inter"/>
</dbReference>
<dbReference type="InterPro" id="IPR024759">
    <property type="entry name" value="UvrB_YAD/RRR_dom"/>
</dbReference>
<dbReference type="NCBIfam" id="NF003673">
    <property type="entry name" value="PRK05298.1"/>
    <property type="match status" value="1"/>
</dbReference>
<dbReference type="NCBIfam" id="TIGR00631">
    <property type="entry name" value="uvrb"/>
    <property type="match status" value="1"/>
</dbReference>
<dbReference type="PANTHER" id="PTHR24029">
    <property type="entry name" value="UVRABC SYSTEM PROTEIN B"/>
    <property type="match status" value="1"/>
</dbReference>
<dbReference type="PANTHER" id="PTHR24029:SF0">
    <property type="entry name" value="UVRABC SYSTEM PROTEIN B"/>
    <property type="match status" value="1"/>
</dbReference>
<dbReference type="Pfam" id="PF00271">
    <property type="entry name" value="Helicase_C"/>
    <property type="match status" value="1"/>
</dbReference>
<dbReference type="Pfam" id="PF04851">
    <property type="entry name" value="ResIII"/>
    <property type="match status" value="1"/>
</dbReference>
<dbReference type="Pfam" id="PF02151">
    <property type="entry name" value="UVR"/>
    <property type="match status" value="1"/>
</dbReference>
<dbReference type="Pfam" id="PF12344">
    <property type="entry name" value="UvrB"/>
    <property type="match status" value="1"/>
</dbReference>
<dbReference type="Pfam" id="PF17757">
    <property type="entry name" value="UvrB_inter"/>
    <property type="match status" value="1"/>
</dbReference>
<dbReference type="SMART" id="SM00487">
    <property type="entry name" value="DEXDc"/>
    <property type="match status" value="1"/>
</dbReference>
<dbReference type="SMART" id="SM00490">
    <property type="entry name" value="HELICc"/>
    <property type="match status" value="1"/>
</dbReference>
<dbReference type="SUPFAM" id="SSF46600">
    <property type="entry name" value="C-terminal UvrC-binding domain of UvrB"/>
    <property type="match status" value="1"/>
</dbReference>
<dbReference type="SUPFAM" id="SSF52540">
    <property type="entry name" value="P-loop containing nucleoside triphosphate hydrolases"/>
    <property type="match status" value="2"/>
</dbReference>
<dbReference type="PROSITE" id="PS51192">
    <property type="entry name" value="HELICASE_ATP_BIND_1"/>
    <property type="match status" value="1"/>
</dbReference>
<dbReference type="PROSITE" id="PS51194">
    <property type="entry name" value="HELICASE_CTER"/>
    <property type="match status" value="1"/>
</dbReference>
<dbReference type="PROSITE" id="PS50151">
    <property type="entry name" value="UVR"/>
    <property type="match status" value="1"/>
</dbReference>
<feature type="chain" id="PRO_0000138414" description="UvrABC system protein B">
    <location>
        <begin position="1"/>
        <end position="675"/>
    </location>
</feature>
<feature type="domain" description="Helicase ATP-binding" evidence="1">
    <location>
        <begin position="32"/>
        <end position="417"/>
    </location>
</feature>
<feature type="domain" description="Helicase C-terminal" evidence="1">
    <location>
        <begin position="436"/>
        <end position="602"/>
    </location>
</feature>
<feature type="domain" description="UVR" evidence="1">
    <location>
        <begin position="634"/>
        <end position="669"/>
    </location>
</feature>
<feature type="short sequence motif" description="Beta-hairpin">
    <location>
        <begin position="98"/>
        <end position="121"/>
    </location>
</feature>
<feature type="binding site" evidence="1">
    <location>
        <begin position="45"/>
        <end position="52"/>
    </location>
    <ligand>
        <name>ATP</name>
        <dbReference type="ChEBI" id="CHEBI:30616"/>
    </ligand>
</feature>